<protein>
    <recommendedName>
        <fullName>Serine/threonine-protein kinase TNNI3K</fullName>
        <ecNumber>2.7.11.1</ecNumber>
    </recommendedName>
    <alternativeName>
        <fullName>Cardiac ankyrin repeat kinase</fullName>
    </alternativeName>
    <alternativeName>
        <fullName>Cardiac troponin I-interacting kinase</fullName>
    </alternativeName>
    <alternativeName>
        <fullName>TNNI3-interacting kinase</fullName>
    </alternativeName>
</protein>
<sequence>MGNYKSRPTQTCTDEWKKKVSESYVITIERLEDDLQIKEKELTELRNIFGSDEAFSKVNLNYRTENGLSLLHLCCICGGKKSHIRTLMLKGLRPSRLTRNGFTALHLAVYKDNAELITSLLHSGADIQQVGYGGLTALHIATIAGHLEAADVLLQHGANVNIQDAVFFTPLHIAAYYGHEQVTRLLLKFGADVNVSGEVGDRPLHLASAKGFLNIAKLLMEEGSKADVNAQDNEDHVPLHFCSRFGHHDIVKYLLQSDLEVQPHVVNIYGDTPLHLACYNGKFEVAKEIIQISGTESLTKENIFSETAFHSACTYGKSIDLVKFLLDQNVININHQGRDGHTGLHSACYHGHIRLVQFLLDNGADMNLVACDPSRSSGEKDEQTCLMWAYEKGHDAIVTLLKHYKRPQDELPCNEYSQPGGDGSYVSVPSPLGKIKSMTKEKADILLLRAGLPSHFHLQLSEIEFHEIIGSGSFGKVYKGRCRNKIVAIKRYRANTYCSKSDVDMFCREVSILCQLNHPCVIQFVGACLNDPSQFAIVTQYISGGSLFSLLHEQKRILDLQSKLIIAVDVAKGMEYLHNLTQPIIHRDLNSHNILLYEDGHAVVADFGESRFLQSLDEDNMTKQPGNLRWMAPEVFTQCTRYTIKADVFSYALCLWEILTGEIPFAHLKPAAAAADMAYHHIRPPIGYSIPKPISSLLIRGWNACPEGRPEFSEVVMKLEECLCNIELMSPASSNSSGSLSPSSSSDCLVNRGGPGRSHVAALRSRFELEYALNARSYAALSQSAGQYSSQGLSLEEMKRSLQYTPIDKYGYVSDPMSSMHFHSCRNSSSFEDSS</sequence>
<comment type="function">
    <text evidence="14">May play a role in cardiac physiology.</text>
</comment>
<comment type="catalytic activity">
    <reaction evidence="4">
        <text>L-seryl-[protein] + ATP = O-phospho-L-seryl-[protein] + ADP + H(+)</text>
        <dbReference type="Rhea" id="RHEA:17989"/>
        <dbReference type="Rhea" id="RHEA-COMP:9863"/>
        <dbReference type="Rhea" id="RHEA-COMP:11604"/>
        <dbReference type="ChEBI" id="CHEBI:15378"/>
        <dbReference type="ChEBI" id="CHEBI:29999"/>
        <dbReference type="ChEBI" id="CHEBI:30616"/>
        <dbReference type="ChEBI" id="CHEBI:83421"/>
        <dbReference type="ChEBI" id="CHEBI:456216"/>
        <dbReference type="EC" id="2.7.11.1"/>
    </reaction>
</comment>
<comment type="catalytic activity">
    <reaction evidence="4">
        <text>L-threonyl-[protein] + ATP = O-phospho-L-threonyl-[protein] + ADP + H(+)</text>
        <dbReference type="Rhea" id="RHEA:46608"/>
        <dbReference type="Rhea" id="RHEA-COMP:11060"/>
        <dbReference type="Rhea" id="RHEA-COMP:11605"/>
        <dbReference type="ChEBI" id="CHEBI:15378"/>
        <dbReference type="ChEBI" id="CHEBI:30013"/>
        <dbReference type="ChEBI" id="CHEBI:30616"/>
        <dbReference type="ChEBI" id="CHEBI:61977"/>
        <dbReference type="ChEBI" id="CHEBI:456216"/>
        <dbReference type="EC" id="2.7.11.1"/>
    </reaction>
</comment>
<comment type="cofactor">
    <cofactor evidence="4">
        <name>Mg(2+)</name>
        <dbReference type="ChEBI" id="CHEBI:18420"/>
    </cofactor>
</comment>
<comment type="subunit">
    <text evidence="4">Interacts with TNNI3, ACTC1, ACTA1, MYBPC3, AIP, FABP3 and HADHB.</text>
</comment>
<comment type="interaction">
    <interactant intactId="EBI-704142">
        <id>Q59H18</id>
    </interactant>
    <interactant intactId="EBI-960409">
        <id>Q9UKT5</id>
        <label>FBXO4</label>
    </interactant>
    <organismsDiffer>false</organismsDiffer>
    <experiments>3</experiments>
</comment>
<comment type="interaction">
    <interactant intactId="EBI-704142">
        <id>Q59H18</id>
    </interactant>
    <interactant intactId="EBI-704146">
        <id>P19429</id>
        <label>TNNI3</label>
    </interactant>
    <organismsDiffer>false</organismsDiffer>
    <experiments>2</experiments>
</comment>
<comment type="interaction">
    <interactant intactId="EBI-10762055">
        <id>Q59H18-2</id>
    </interactant>
    <interactant intactId="EBI-704146">
        <id>P19429</id>
        <label>TNNI3</label>
    </interactant>
    <organismsDiffer>false</organismsDiffer>
    <experiments>2</experiments>
</comment>
<comment type="subcellular location">
    <subcellularLocation>
        <location evidence="4">Nucleus</location>
    </subcellularLocation>
    <subcellularLocation>
        <location evidence="4">Cytoplasm</location>
    </subcellularLocation>
    <text>Expressed at lower levels in the cytoplasm.</text>
</comment>
<comment type="alternative products">
    <event type="alternative splicing"/>
    <isoform>
        <id>Q59H18-2</id>
        <name evidence="4">2</name>
        <sequence type="displayed"/>
    </isoform>
    <isoform>
        <id>Q59H18-1</id>
        <name evidence="18">1</name>
        <sequence type="described" ref="VSP_039403"/>
    </isoform>
    <isoform>
        <id>Q59H18-3</id>
        <name evidence="18">3</name>
        <sequence type="described" ref="VSP_039403 VSP_051882 VSP_051883"/>
    </isoform>
    <isoform>
        <id>Q59H18-4</id>
        <name evidence="18">4</name>
        <sequence type="described" ref="VSP_039403 VSP_051884 VSP_051885"/>
    </isoform>
</comment>
<comment type="tissue specificity">
    <text evidence="4">Highly expressed in both adult and fetal heart.</text>
</comment>
<comment type="PTM">
    <text evidence="4 12">Autophosphorylated.</text>
</comment>
<comment type="disease" evidence="7 8 9 11 12">
    <disease id="DI-04282">
        <name>Cardiac conduction disease with or without dilated cardiomyopathy</name>
        <acronym>CCDD</acronym>
        <description>A cardiac disorder characterized by atrial tachyarrhythmia and conduction system disease. Some patients have dilated cardiomyopathy. CCDD inheritance is autosomal dominant.</description>
        <dbReference type="MIM" id="616117"/>
    </disease>
    <text>The disease is caused by variants affecting the gene represented in this entry.</text>
</comment>
<comment type="miscellaneous">
    <molecule>Isoform 1</molecule>
    <text evidence="18">Based on a naturally occurring readthrough transcript which produces a FPGT-TNNI3K fusion protein.</text>
</comment>
<comment type="miscellaneous">
    <molecule>Isoform 3</molecule>
    <text evidence="18">Based on a naturally occurring readthrough transcript which produces a FPGT-TNNI3K fusion protein.</text>
</comment>
<comment type="miscellaneous">
    <molecule>Isoform 4</molecule>
    <text evidence="18">Based on a naturally occurring readthrough transcript which produces a FPGT-TNNI3K fusion protein.</text>
</comment>
<comment type="similarity">
    <text evidence="18">Belongs to the protein kinase superfamily. TKL Ser/Thr protein kinase family. MAP kinase kinase kinase subfamily.</text>
</comment>
<comment type="sequence caution" evidence="18">
    <conflict type="erroneous initiation">
        <sequence resource="EMBL-CDS" id="BAD92178"/>
    </conflict>
    <text>Extended N-terminus.</text>
</comment>
<comment type="sequence caution" evidence="18">
    <conflict type="erroneous initiation">
        <sequence resource="EMBL-CDS" id="CAE45949"/>
    </conflict>
    <text>Extended N-terminus.</text>
</comment>
<reference evidence="18 19" key="1">
    <citation type="journal article" date="2003" name="J. Mol. Med.">
        <title>Cloning and characterization of a novel cardiac-specific kinase that interacts specifically with cardiac troponin I.</title>
        <authorList>
            <person name="Zhao Y."/>
            <person name="Meng X.-M."/>
            <person name="Wei Y.-J."/>
            <person name="Zhao X.-W."/>
            <person name="Liu D.-Q."/>
            <person name="Cao H.-Q."/>
            <person name="Liew C.-C."/>
            <person name="Ding J.-F."/>
        </authorList>
    </citation>
    <scope>NUCLEOTIDE SEQUENCE [MRNA] (ISOFORM 2)</scope>
    <scope>FUNCTION</scope>
    <scope>TISSUE SPECIFICITY</scope>
    <scope>SUBCELLULAR LOCATION</scope>
    <scope>AUTOPHOSPHORYLATION</scope>
    <scope>INTERACTION WITH TNNI3; ACTC1; ACTA1; MYBPC3; AIP; FABP3 AND HADHB</scope>
    <scope>MUTAGENESIS OF LYS-490</scope>
    <source>
        <tissue evidence="19">Heart</tissue>
    </source>
</reference>
<reference evidence="18 21" key="2">
    <citation type="submission" date="2003-05" db="EMBL/GenBank/DDBJ databases">
        <title>Cardiac ankyrin repeat kinase (CARK).</title>
        <authorList>
            <person name="Jeyaseelan R."/>
        </authorList>
    </citation>
    <scope>NUCLEOTIDE SEQUENCE [MRNA] (ISOFORM 2)</scope>
</reference>
<reference evidence="18 21" key="3">
    <citation type="submission" date="2005-03" db="EMBL/GenBank/DDBJ databases">
        <authorList>
            <person name="Totoki Y."/>
            <person name="Toyoda A."/>
            <person name="Takeda T."/>
            <person name="Sakaki Y."/>
            <person name="Tanaka A."/>
            <person name="Yokoyama S."/>
            <person name="Ohara O."/>
            <person name="Nagase T."/>
            <person name="Kikuno R.F."/>
        </authorList>
    </citation>
    <scope>NUCLEOTIDE SEQUENCE [LARGE SCALE MRNA] (ISOFORM 1)</scope>
    <source>
        <tissue evidence="22">Brain</tissue>
    </source>
</reference>
<reference key="4">
    <citation type="journal article" date="2007" name="BMC Genomics">
        <title>The full-ORF clone resource of the German cDNA consortium.</title>
        <authorList>
            <person name="Bechtel S."/>
            <person name="Rosenfelder H."/>
            <person name="Duda A."/>
            <person name="Schmidt C.P."/>
            <person name="Ernst U."/>
            <person name="Wellenreuther R."/>
            <person name="Mehrle A."/>
            <person name="Schuster C."/>
            <person name="Bahr A."/>
            <person name="Bloecker H."/>
            <person name="Heubner D."/>
            <person name="Hoerlein A."/>
            <person name="Michel G."/>
            <person name="Wedler H."/>
            <person name="Koehrer K."/>
            <person name="Ottenwaelder B."/>
            <person name="Poustka A."/>
            <person name="Wiemann S."/>
            <person name="Schupp I."/>
        </authorList>
    </citation>
    <scope>NUCLEOTIDE SEQUENCE [LARGE SCALE MRNA] (ISOFORM 3)</scope>
    <source>
        <tissue>Fetal kidney</tissue>
    </source>
</reference>
<reference evidence="18 21" key="5">
    <citation type="submission" date="2006-08" db="EMBL/GenBank/DDBJ databases">
        <authorList>
            <consortium name="SeattleSNPs variation discovery resource"/>
        </authorList>
    </citation>
    <scope>NUCLEOTIDE SEQUENCE [GENOMIC DNA]</scope>
    <scope>VARIANTS GLY-785 AND TYR-833</scope>
</reference>
<reference key="6">
    <citation type="journal article" date="2006" name="Nature">
        <title>The DNA sequence and biological annotation of human chromosome 1.</title>
        <authorList>
            <person name="Gregory S.G."/>
            <person name="Barlow K.F."/>
            <person name="McLay K.E."/>
            <person name="Kaul R."/>
            <person name="Swarbreck D."/>
            <person name="Dunham A."/>
            <person name="Scott C.E."/>
            <person name="Howe K.L."/>
            <person name="Woodfine K."/>
            <person name="Spencer C.C.A."/>
            <person name="Jones M.C."/>
            <person name="Gillson C."/>
            <person name="Searle S."/>
            <person name="Zhou Y."/>
            <person name="Kokocinski F."/>
            <person name="McDonald L."/>
            <person name="Evans R."/>
            <person name="Phillips K."/>
            <person name="Atkinson A."/>
            <person name="Cooper R."/>
            <person name="Jones C."/>
            <person name="Hall R.E."/>
            <person name="Andrews T.D."/>
            <person name="Lloyd C."/>
            <person name="Ainscough R."/>
            <person name="Almeida J.P."/>
            <person name="Ambrose K.D."/>
            <person name="Anderson F."/>
            <person name="Andrew R.W."/>
            <person name="Ashwell R.I.S."/>
            <person name="Aubin K."/>
            <person name="Babbage A.K."/>
            <person name="Bagguley C.L."/>
            <person name="Bailey J."/>
            <person name="Beasley H."/>
            <person name="Bethel G."/>
            <person name="Bird C.P."/>
            <person name="Bray-Allen S."/>
            <person name="Brown J.Y."/>
            <person name="Brown A.J."/>
            <person name="Buckley D."/>
            <person name="Burton J."/>
            <person name="Bye J."/>
            <person name="Carder C."/>
            <person name="Chapman J.C."/>
            <person name="Clark S.Y."/>
            <person name="Clarke G."/>
            <person name="Clee C."/>
            <person name="Cobley V."/>
            <person name="Collier R.E."/>
            <person name="Corby N."/>
            <person name="Coville G.J."/>
            <person name="Davies J."/>
            <person name="Deadman R."/>
            <person name="Dunn M."/>
            <person name="Earthrowl M."/>
            <person name="Ellington A.G."/>
            <person name="Errington H."/>
            <person name="Frankish A."/>
            <person name="Frankland J."/>
            <person name="French L."/>
            <person name="Garner P."/>
            <person name="Garnett J."/>
            <person name="Gay L."/>
            <person name="Ghori M.R.J."/>
            <person name="Gibson R."/>
            <person name="Gilby L.M."/>
            <person name="Gillett W."/>
            <person name="Glithero R.J."/>
            <person name="Grafham D.V."/>
            <person name="Griffiths C."/>
            <person name="Griffiths-Jones S."/>
            <person name="Grocock R."/>
            <person name="Hammond S."/>
            <person name="Harrison E.S.I."/>
            <person name="Hart E."/>
            <person name="Haugen E."/>
            <person name="Heath P.D."/>
            <person name="Holmes S."/>
            <person name="Holt K."/>
            <person name="Howden P.J."/>
            <person name="Hunt A.R."/>
            <person name="Hunt S.E."/>
            <person name="Hunter G."/>
            <person name="Isherwood J."/>
            <person name="James R."/>
            <person name="Johnson C."/>
            <person name="Johnson D."/>
            <person name="Joy A."/>
            <person name="Kay M."/>
            <person name="Kershaw J.K."/>
            <person name="Kibukawa M."/>
            <person name="Kimberley A.M."/>
            <person name="King A."/>
            <person name="Knights A.J."/>
            <person name="Lad H."/>
            <person name="Laird G."/>
            <person name="Lawlor S."/>
            <person name="Leongamornlert D.A."/>
            <person name="Lloyd D.M."/>
            <person name="Loveland J."/>
            <person name="Lovell J."/>
            <person name="Lush M.J."/>
            <person name="Lyne R."/>
            <person name="Martin S."/>
            <person name="Mashreghi-Mohammadi M."/>
            <person name="Matthews L."/>
            <person name="Matthews N.S.W."/>
            <person name="McLaren S."/>
            <person name="Milne S."/>
            <person name="Mistry S."/>
            <person name="Moore M.J.F."/>
            <person name="Nickerson T."/>
            <person name="O'Dell C.N."/>
            <person name="Oliver K."/>
            <person name="Palmeiri A."/>
            <person name="Palmer S.A."/>
            <person name="Parker A."/>
            <person name="Patel D."/>
            <person name="Pearce A.V."/>
            <person name="Peck A.I."/>
            <person name="Pelan S."/>
            <person name="Phelps K."/>
            <person name="Phillimore B.J."/>
            <person name="Plumb R."/>
            <person name="Rajan J."/>
            <person name="Raymond C."/>
            <person name="Rouse G."/>
            <person name="Saenphimmachak C."/>
            <person name="Sehra H.K."/>
            <person name="Sheridan E."/>
            <person name="Shownkeen R."/>
            <person name="Sims S."/>
            <person name="Skuce C.D."/>
            <person name="Smith M."/>
            <person name="Steward C."/>
            <person name="Subramanian S."/>
            <person name="Sycamore N."/>
            <person name="Tracey A."/>
            <person name="Tromans A."/>
            <person name="Van Helmond Z."/>
            <person name="Wall M."/>
            <person name="Wallis J.M."/>
            <person name="White S."/>
            <person name="Whitehead S.L."/>
            <person name="Wilkinson J.E."/>
            <person name="Willey D.L."/>
            <person name="Williams H."/>
            <person name="Wilming L."/>
            <person name="Wray P.W."/>
            <person name="Wu Z."/>
            <person name="Coulson A."/>
            <person name="Vaudin M."/>
            <person name="Sulston J.E."/>
            <person name="Durbin R.M."/>
            <person name="Hubbard T."/>
            <person name="Wooster R."/>
            <person name="Dunham I."/>
            <person name="Carter N.P."/>
            <person name="McVean G."/>
            <person name="Ross M.T."/>
            <person name="Harrow J."/>
            <person name="Olson M.V."/>
            <person name="Beck S."/>
            <person name="Rogers J."/>
            <person name="Bentley D.R."/>
        </authorList>
    </citation>
    <scope>NUCLEOTIDE SEQUENCE [LARGE SCALE GENOMIC DNA]</scope>
</reference>
<reference evidence="18 21" key="7">
    <citation type="submission" date="2005-09" db="EMBL/GenBank/DDBJ databases">
        <authorList>
            <person name="Mural R.J."/>
            <person name="Istrail S."/>
            <person name="Sutton G.G."/>
            <person name="Florea L."/>
            <person name="Halpern A.L."/>
            <person name="Mobarry C.M."/>
            <person name="Lippert R."/>
            <person name="Walenz B."/>
            <person name="Shatkay H."/>
            <person name="Dew I."/>
            <person name="Miller J.R."/>
            <person name="Flanigan M.J."/>
            <person name="Edwards N.J."/>
            <person name="Bolanos R."/>
            <person name="Fasulo D."/>
            <person name="Halldorsson B.V."/>
            <person name="Hannenhalli S."/>
            <person name="Turner R."/>
            <person name="Yooseph S."/>
            <person name="Lu F."/>
            <person name="Nusskern D.R."/>
            <person name="Shue B.C."/>
            <person name="Zheng X.H."/>
            <person name="Zhong F."/>
            <person name="Delcher A.L."/>
            <person name="Huson D.H."/>
            <person name="Kravitz S.A."/>
            <person name="Mouchard L."/>
            <person name="Reinert K."/>
            <person name="Remington K.A."/>
            <person name="Clark A.G."/>
            <person name="Waterman M.S."/>
            <person name="Eichler E.E."/>
            <person name="Adams M.D."/>
            <person name="Hunkapiller M.W."/>
            <person name="Myers E.W."/>
            <person name="Venter J.C."/>
        </authorList>
    </citation>
    <scope>NUCLEOTIDE SEQUENCE [LARGE SCALE GENOMIC DNA]</scope>
</reference>
<reference evidence="18 20" key="8">
    <citation type="journal article" date="2004" name="Genome Res.">
        <title>The status, quality, and expansion of the NIH full-length cDNA project: the Mammalian Gene Collection (MGC).</title>
        <authorList>
            <consortium name="The MGC Project Team"/>
        </authorList>
    </citation>
    <scope>NUCLEOTIDE SEQUENCE [LARGE SCALE MRNA] (ISOFORMS 2 AND 4)</scope>
    <source>
        <tissue evidence="20">Brain</tissue>
    </source>
</reference>
<reference key="9">
    <citation type="journal article" date="2006" name="Science">
        <title>The consensus coding sequences of human breast and colorectal cancers.</title>
        <authorList>
            <person name="Sjoeblom T."/>
            <person name="Jones S."/>
            <person name="Wood L.D."/>
            <person name="Parsons D.W."/>
            <person name="Lin J."/>
            <person name="Barber T.D."/>
            <person name="Mandelker D."/>
            <person name="Leary R.J."/>
            <person name="Ptak J."/>
            <person name="Silliman N."/>
            <person name="Szabo S."/>
            <person name="Buckhaults P."/>
            <person name="Farrell C."/>
            <person name="Meeh P."/>
            <person name="Markowitz S.D."/>
            <person name="Willis J."/>
            <person name="Dawson D."/>
            <person name="Willson J.K.V."/>
            <person name="Gazdar A.F."/>
            <person name="Hartigan J."/>
            <person name="Wu L."/>
            <person name="Liu C."/>
            <person name="Parmigiani G."/>
            <person name="Park B.H."/>
            <person name="Bachman K.E."/>
            <person name="Papadopoulos N."/>
            <person name="Vogelstein B."/>
            <person name="Kinzler K.W."/>
            <person name="Velculescu V.E."/>
        </authorList>
    </citation>
    <scope>VARIANT [LARGE SCALE ANALYSIS] GLY-629</scope>
</reference>
<reference key="10">
    <citation type="journal article" date="2007" name="Nature">
        <title>Patterns of somatic mutation in human cancer genomes.</title>
        <authorList>
            <person name="Greenman C."/>
            <person name="Stephens P."/>
            <person name="Smith R."/>
            <person name="Dalgliesh G.L."/>
            <person name="Hunter C."/>
            <person name="Bignell G."/>
            <person name="Davies H."/>
            <person name="Teague J."/>
            <person name="Butler A."/>
            <person name="Stevens C."/>
            <person name="Edkins S."/>
            <person name="O'Meara S."/>
            <person name="Vastrik I."/>
            <person name="Schmidt E.E."/>
            <person name="Avis T."/>
            <person name="Barthorpe S."/>
            <person name="Bhamra G."/>
            <person name="Buck G."/>
            <person name="Choudhury B."/>
            <person name="Clements J."/>
            <person name="Cole J."/>
            <person name="Dicks E."/>
            <person name="Forbes S."/>
            <person name="Gray K."/>
            <person name="Halliday K."/>
            <person name="Harrison R."/>
            <person name="Hills K."/>
            <person name="Hinton J."/>
            <person name="Jenkinson A."/>
            <person name="Jones D."/>
            <person name="Menzies A."/>
            <person name="Mironenko T."/>
            <person name="Perry J."/>
            <person name="Raine K."/>
            <person name="Richardson D."/>
            <person name="Shepherd R."/>
            <person name="Small A."/>
            <person name="Tofts C."/>
            <person name="Varian J."/>
            <person name="Webb T."/>
            <person name="West S."/>
            <person name="Widaa S."/>
            <person name="Yates A."/>
            <person name="Cahill D.P."/>
            <person name="Louis D.N."/>
            <person name="Goldstraw P."/>
            <person name="Nicholson A.G."/>
            <person name="Brasseur F."/>
            <person name="Looijenga L."/>
            <person name="Weber B.L."/>
            <person name="Chiew Y.-E."/>
            <person name="DeFazio A."/>
            <person name="Greaves M.F."/>
            <person name="Green A.R."/>
            <person name="Campbell P."/>
            <person name="Birney E."/>
            <person name="Easton D.F."/>
            <person name="Chenevix-Trench G."/>
            <person name="Tan M.-H."/>
            <person name="Khoo S.K."/>
            <person name="Teh B.T."/>
            <person name="Yuen S.T."/>
            <person name="Leung S.Y."/>
            <person name="Wooster R."/>
            <person name="Futreal P.A."/>
            <person name="Stratton M.R."/>
        </authorList>
    </citation>
    <scope>VARIANTS [LARGE SCALE ANALYSIS] HIS-151; LEU-263; LEU-309; LEU-430; LEU-510; MET-637; THR-686 AND ILE-798</scope>
</reference>
<reference key="11">
    <citation type="journal article" date="2014" name="Hum. Mol. Genet.">
        <title>TNNI3K mutation in familial syndrome of conduction system disease, atrial tachyarrhythmia and dilated cardiomyopathy.</title>
        <authorList>
            <person name="Theis J.L."/>
            <person name="Zimmermann M.T."/>
            <person name="Larsen B.T."/>
            <person name="Rybakova I.N."/>
            <person name="Long P.A."/>
            <person name="Evans J.M."/>
            <person name="Middha S."/>
            <person name="de Andrade M."/>
            <person name="Moss R.L."/>
            <person name="Wieben E.D."/>
            <person name="Michels V.V."/>
            <person name="Olson T.M."/>
        </authorList>
    </citation>
    <scope>INVOLVEMENT IN CCDD</scope>
    <scope>VARIANT CCDD ASP-526</scope>
    <scope>CHARACTERIZATION OF VARIANT CCDD ASP-526</scope>
</reference>
<reference key="12">
    <citation type="journal article" date="2015" name="Int. J. Cardiol.">
        <title>Whole exome sequencing identifies the TNNI3K gene as a cause of familial conduction system disease and congenital junctional ectopic tachycardia.</title>
        <authorList>
            <consortium name="Care4Rare Canada Consortium"/>
            <person name="Xi Y."/>
            <person name="Honeywell C."/>
            <person name="Zhang D."/>
            <person name="Schwartzentruber J."/>
            <person name="Beaulieu C.L."/>
            <person name="Tetreault M."/>
            <person name="Hartley T."/>
            <person name="Marton J."/>
            <person name="Vidal S.M."/>
            <person name="Majewski J."/>
            <person name="Aravind L."/>
            <person name="Gollob M."/>
            <person name="Boycott K.M."/>
            <person name="Gow R.M."/>
        </authorList>
    </citation>
    <scope>VARIANT CCDD ALA-539</scope>
</reference>
<reference key="13">
    <citation type="journal article" date="2019" name="Heart Rhythm">
        <title>Supraventricular tachycardias, conduction disease, and cardiomyopathy in 3 families with the same rare variant in TNNI3K (p.Glu768Lys).</title>
        <authorList>
            <person name="Podliesna S."/>
            <person name="Delanne J."/>
            <person name="Miller L."/>
            <person name="Tester D.J."/>
            <person name="Uzunyan M."/>
            <person name="Yano S."/>
            <person name="Klerk M."/>
            <person name="Cannon B.C."/>
            <person name="Khongphatthanayothin A."/>
            <person name="Laurent G."/>
            <person name="Bertaux G."/>
            <person name="Falcon-Eicher S."/>
            <person name="Wu S."/>
            <person name="Yen H.Y."/>
            <person name="Gao H."/>
            <person name="Wilde A.A.M."/>
            <person name="Faivre L."/>
            <person name="Ackerman M.J."/>
            <person name="Lodder E.M."/>
            <person name="Bezzina C.R."/>
        </authorList>
    </citation>
    <scope>VARIANT CCDD LYS-768</scope>
    <scope>CHARACTERIZATION OF VARIANTS ASP-526 AND LYS-768</scope>
</reference>
<reference key="14">
    <citation type="journal article" date="2021" name="Genes (Basel)">
        <title>A novel missense mutation in TNNI3K causes recessively inherited cardiac conduction disease in a consanguineous Pakistani family.</title>
        <authorList>
            <person name="Ramzan S."/>
            <person name="Tennstedt S."/>
            <person name="Tariq M."/>
            <person name="Khan S."/>
            <person name="Noor Ul Ayan H."/>
            <person name="Ali A."/>
            <person name="Munz M."/>
            <person name="Thiele H."/>
            <person name="Korejo A.A."/>
            <person name="Mughal A.R."/>
            <person name="Jamal S.Z."/>
            <person name="Nuernberg P."/>
            <person name="Baig S.M."/>
            <person name="Erdmann J."/>
            <person name="Ahmad I."/>
        </authorList>
    </citation>
    <scope>VARIANT PRO-511</scope>
</reference>
<reference key="15">
    <citation type="journal article" date="2023" name="Circ. Genom. Precis. Med.">
        <title>Genetic burden of TNNI3K in diagnostic testing of patients with dilated cardiomyopathy and supraventricular arrhythmias.</title>
        <authorList>
            <person name="Pham C."/>
            <person name="Andrzejczyk K."/>
            <person name="Jurgens S.J."/>
            <person name="Lekanne Deprez R."/>
            <person name="Palm K.C.A."/>
            <person name="Vermeer A.M.C."/>
            <person name="Nijman J."/>
            <person name="Christiaans I."/>
            <person name="Barge-Schaapveld D.Q.C.M."/>
            <person name="van Dessel P.F.H.M."/>
            <person name="Beekman L."/>
            <person name="Choi S.H."/>
            <person name="Lubitz S.A."/>
            <person name="Skoric-Milosavljevic D."/>
            <person name="van den Bersselaar L."/>
            <person name="Jansen P.R."/>
            <person name="Copier J.S."/>
            <person name="Ellinor P.T."/>
            <person name="Wilde A.A.M."/>
            <person name="Bezzina C.R."/>
            <person name="Lodder E.M."/>
        </authorList>
    </citation>
    <scope>VARIANTS CCDD THR-512; TYR-592 AND VAL-671</scope>
    <scope>CHARACTERIZATION OF VARIANTS CCDD THR-512; TYR-592; VAL-671 AND LEU-742</scope>
    <scope>CHARACTERIZATION OF VARIANTS LEU-510; PRO-511 AND THR-591</scope>
    <scope>MUTAGENESIS OF LYS-490; ILE-512 AND 556-ARG--ASN-590</scope>
</reference>
<reference key="16">
    <citation type="journal article" date="2024" name="Clin. Genet.">
        <title>Reduced kinase function in two ultra-rare TNNI3K variants in families with congenital junctional ectopic tachycardia.</title>
        <authorList>
            <person name="Pham C."/>
            <person name="Koopmann T.T."/>
            <person name="Vinocur J.M."/>
            <person name="Blom N.A."/>
            <person name="Nogueira Silbiger V."/>
            <person name="Mittal K."/>
            <person name="Bootsma M."/>
            <person name="Palm K.C.A."/>
            <person name="Clur S.B."/>
            <person name="Barge-Schaapveld D.Q.C.M."/>
            <person name="Hamilton R.M."/>
            <person name="Lodder E.M."/>
        </authorList>
    </citation>
    <scope>VARIANTS CCDD PHE-577 AND LEU-742</scope>
    <scope>CHARACTERIZATION OF VARIANT CCDD PHE-577</scope>
    <scope>AUTOPHOSPHORYLATION</scope>
</reference>
<gene>
    <name evidence="20" type="primary">TNNI3K</name>
    <name type="synonym">CARK</name>
</gene>
<proteinExistence type="evidence at protein level"/>
<dbReference type="EC" id="2.7.11.1"/>
<dbReference type="EMBL" id="AF116826">
    <property type="protein sequence ID" value="AAD29632.1"/>
    <property type="molecule type" value="mRNA"/>
</dbReference>
<dbReference type="EMBL" id="AY303691">
    <property type="protein sequence ID" value="AAP72030.1"/>
    <property type="molecule type" value="mRNA"/>
</dbReference>
<dbReference type="EMBL" id="AB208941">
    <property type="protein sequence ID" value="BAD92178.1"/>
    <property type="status" value="ALT_INIT"/>
    <property type="molecule type" value="Transcribed_RNA"/>
</dbReference>
<dbReference type="EMBL" id="BX640903">
    <property type="protein sequence ID" value="CAE45949.1"/>
    <property type="status" value="ALT_INIT"/>
    <property type="molecule type" value="mRNA"/>
</dbReference>
<dbReference type="EMBL" id="DQ822519">
    <property type="protein sequence ID" value="ABG46944.1"/>
    <property type="molecule type" value="Genomic_DNA"/>
</dbReference>
<dbReference type="EMBL" id="AC093158">
    <property type="status" value="NOT_ANNOTATED_CDS"/>
    <property type="molecule type" value="Genomic_DNA"/>
</dbReference>
<dbReference type="EMBL" id="AC098692">
    <property type="status" value="NOT_ANNOTATED_CDS"/>
    <property type="molecule type" value="Genomic_DNA"/>
</dbReference>
<dbReference type="EMBL" id="AC105271">
    <property type="status" value="NOT_ANNOTATED_CDS"/>
    <property type="molecule type" value="Genomic_DNA"/>
</dbReference>
<dbReference type="EMBL" id="AC119672">
    <property type="status" value="NOT_ANNOTATED_CDS"/>
    <property type="molecule type" value="Genomic_DNA"/>
</dbReference>
<dbReference type="EMBL" id="BX470253">
    <property type="status" value="NOT_ANNOTATED_CDS"/>
    <property type="molecule type" value="Genomic_DNA"/>
</dbReference>
<dbReference type="EMBL" id="CH471059">
    <property type="protein sequence ID" value="EAX06415.1"/>
    <property type="molecule type" value="Genomic_DNA"/>
</dbReference>
<dbReference type="EMBL" id="BC032865">
    <property type="protein sequence ID" value="AAH32865.1"/>
    <property type="molecule type" value="mRNA"/>
</dbReference>
<dbReference type="EMBL" id="BC113539">
    <property type="protein sequence ID" value="AAI13540.1"/>
    <property type="molecule type" value="mRNA"/>
</dbReference>
<dbReference type="EMBL" id="BC117262">
    <property type="protein sequence ID" value="AAI17263.1"/>
    <property type="molecule type" value="mRNA"/>
</dbReference>
<dbReference type="CCDS" id="CCDS664.1">
    <molecule id="Q59H18-2"/>
</dbReference>
<dbReference type="RefSeq" id="NP_001186256.2">
    <molecule id="Q59H18-4"/>
    <property type="nucleotide sequence ID" value="NM_001199327.1"/>
</dbReference>
<dbReference type="RefSeq" id="NP_057062.1">
    <molecule id="Q59H18-2"/>
    <property type="nucleotide sequence ID" value="NM_015978.3"/>
</dbReference>
<dbReference type="PDB" id="4YFF">
    <property type="method" value="X-ray"/>
    <property type="resolution" value="3.07 A"/>
    <property type="chains" value="A/B/C/D=420-730"/>
</dbReference>
<dbReference type="PDB" id="4YFI">
    <property type="method" value="X-ray"/>
    <property type="resolution" value="2.70 A"/>
    <property type="chains" value="A/B/C/D=402-730"/>
</dbReference>
<dbReference type="PDB" id="6B5J">
    <property type="method" value="X-ray"/>
    <property type="resolution" value="2.97 A"/>
    <property type="chains" value="A/B/C/D=420-730"/>
</dbReference>
<dbReference type="PDB" id="7MGJ">
    <property type="method" value="X-ray"/>
    <property type="resolution" value="2.95 A"/>
    <property type="chains" value="A/B/C/D=402-730"/>
</dbReference>
<dbReference type="PDB" id="7MGK">
    <property type="method" value="X-ray"/>
    <property type="resolution" value="3.10 A"/>
    <property type="chains" value="A/B/C/D=420-730"/>
</dbReference>
<dbReference type="PDBsum" id="4YFF"/>
<dbReference type="PDBsum" id="4YFI"/>
<dbReference type="PDBsum" id="6B5J"/>
<dbReference type="PDBsum" id="7MGJ"/>
<dbReference type="PDBsum" id="7MGK"/>
<dbReference type="SMR" id="Q59H18"/>
<dbReference type="BioGRID" id="119276">
    <property type="interactions" value="18"/>
</dbReference>
<dbReference type="BioGRID" id="1529324">
    <property type="interactions" value="1"/>
</dbReference>
<dbReference type="FunCoup" id="Q59H18">
    <property type="interactions" value="1793"/>
</dbReference>
<dbReference type="IntAct" id="Q59H18">
    <property type="interactions" value="18"/>
</dbReference>
<dbReference type="STRING" id="9606.ENSP00000322251"/>
<dbReference type="BindingDB" id="Q59H18"/>
<dbReference type="ChEMBL" id="CHEMBL5260"/>
<dbReference type="DrugBank" id="DB12010">
    <property type="generic name" value="Fostamatinib"/>
</dbReference>
<dbReference type="DrugCentral" id="Q59H18"/>
<dbReference type="GuidetoPHARMACOLOGY" id="2247"/>
<dbReference type="iPTMnet" id="Q59H18"/>
<dbReference type="PhosphoSitePlus" id="Q59H18"/>
<dbReference type="BioMuta" id="TNNI3K"/>
<dbReference type="DMDM" id="300669705"/>
<dbReference type="jPOST" id="Q59H18"/>
<dbReference type="MassIVE" id="Q59H18"/>
<dbReference type="PaxDb" id="9606-ENSP00000322251"/>
<dbReference type="PeptideAtlas" id="Q59H18"/>
<dbReference type="ProteomicsDB" id="62665">
    <molecule id="Q59H18-2"/>
</dbReference>
<dbReference type="ProteomicsDB" id="62666">
    <molecule id="Q59H18-1"/>
</dbReference>
<dbReference type="ProteomicsDB" id="62667">
    <molecule id="Q59H18-3"/>
</dbReference>
<dbReference type="ProteomicsDB" id="62668">
    <molecule id="Q59H18-4"/>
</dbReference>
<dbReference type="Antibodypedia" id="2103">
    <property type="antibodies" value="149 antibodies from 22 providers"/>
</dbReference>
<dbReference type="DNASU" id="51086"/>
<dbReference type="Ensembl" id="ENST00000326637.8">
    <molecule id="Q59H18-2"/>
    <property type="protein sequence ID" value="ENSP00000322251.3"/>
    <property type="gene ID" value="ENSG00000116783.15"/>
</dbReference>
<dbReference type="GeneID" id="100526835"/>
<dbReference type="GeneID" id="51086"/>
<dbReference type="KEGG" id="hsa:100526835"/>
<dbReference type="KEGG" id="hsa:51086"/>
<dbReference type="MANE-Select" id="ENST00000326637.8">
    <property type="protein sequence ID" value="ENSP00000322251.3"/>
    <property type="RefSeq nucleotide sequence ID" value="NM_015978.3"/>
    <property type="RefSeq protein sequence ID" value="NP_057062.1"/>
</dbReference>
<dbReference type="UCSC" id="uc001dgf.3">
    <molecule id="Q59H18-2"/>
    <property type="organism name" value="human"/>
</dbReference>
<dbReference type="AGR" id="HGNC:19661"/>
<dbReference type="AGR" id="HGNC:42952"/>
<dbReference type="CTD" id="100526835"/>
<dbReference type="CTD" id="51086"/>
<dbReference type="DisGeNET" id="100526835"/>
<dbReference type="DisGeNET" id="51086"/>
<dbReference type="GeneCards" id="TNNI3K"/>
<dbReference type="HGNC" id="HGNC:19661">
    <property type="gene designation" value="TNNI3K"/>
</dbReference>
<dbReference type="HPA" id="ENSG00000116783">
    <property type="expression patterns" value="Tissue enriched (heart)"/>
</dbReference>
<dbReference type="MalaCards" id="TNNI3K"/>
<dbReference type="MIM" id="613932">
    <property type="type" value="gene"/>
</dbReference>
<dbReference type="MIM" id="616117">
    <property type="type" value="phenotype"/>
</dbReference>
<dbReference type="neXtProt" id="NX_Q59H18"/>
<dbReference type="OpenTargets" id="ENSG00000116783"/>
<dbReference type="OpenTargets" id="ENSG00000259030"/>
<dbReference type="Orphanet" id="436242">
    <property type="disease" value="Familial atrial tachyarrhythmia-infra-Hisian cardiac conduction disease"/>
</dbReference>
<dbReference type="PharmGKB" id="PA134976654"/>
<dbReference type="VEuPathDB" id="HostDB:ENSG00000116783"/>
<dbReference type="eggNOG" id="KOG0192">
    <property type="taxonomic scope" value="Eukaryota"/>
</dbReference>
<dbReference type="GeneTree" id="ENSGT00940000159131"/>
<dbReference type="HOGENOM" id="CLU_017658_0_0_1"/>
<dbReference type="InParanoid" id="Q59H18"/>
<dbReference type="OMA" id="NHPCIIH"/>
<dbReference type="OrthoDB" id="339325at2759"/>
<dbReference type="PAN-GO" id="Q59H18">
    <property type="GO annotations" value="2 GO annotations based on evolutionary models"/>
</dbReference>
<dbReference type="PhylomeDB" id="Q59H18"/>
<dbReference type="PathwayCommons" id="Q59H18"/>
<dbReference type="SignaLink" id="Q59H18"/>
<dbReference type="BioGRID-ORCS" id="100526835">
    <property type="hits" value="43 hits in 928 CRISPR screens"/>
</dbReference>
<dbReference type="BioGRID-ORCS" id="51086">
    <property type="hits" value="14 hits in 781 CRISPR screens"/>
</dbReference>
<dbReference type="EvolutionaryTrace" id="Q59H18"/>
<dbReference type="Pharos" id="Q59H18">
    <property type="development level" value="Tchem"/>
</dbReference>
<dbReference type="PRO" id="PR:Q59H18"/>
<dbReference type="Proteomes" id="UP000005640">
    <property type="component" value="Chromosome 1"/>
</dbReference>
<dbReference type="RNAct" id="Q59H18">
    <property type="molecule type" value="protein"/>
</dbReference>
<dbReference type="Bgee" id="ENSG00000116783">
    <property type="expression patterns" value="Expressed in apex of heart and 97 other cell types or tissues"/>
</dbReference>
<dbReference type="ExpressionAtlas" id="Q59H18">
    <property type="expression patterns" value="baseline and differential"/>
</dbReference>
<dbReference type="GO" id="GO:0005737">
    <property type="term" value="C:cytoplasm"/>
    <property type="evidence" value="ECO:0000314"/>
    <property type="project" value="UniProtKB"/>
</dbReference>
<dbReference type="GO" id="GO:0005634">
    <property type="term" value="C:nucleus"/>
    <property type="evidence" value="ECO:0000314"/>
    <property type="project" value="UniProtKB"/>
</dbReference>
<dbReference type="GO" id="GO:0005524">
    <property type="term" value="F:ATP binding"/>
    <property type="evidence" value="ECO:0007669"/>
    <property type="project" value="UniProtKB-KW"/>
</dbReference>
<dbReference type="GO" id="GO:0046872">
    <property type="term" value="F:metal ion binding"/>
    <property type="evidence" value="ECO:0007669"/>
    <property type="project" value="UniProtKB-KW"/>
</dbReference>
<dbReference type="GO" id="GO:0004672">
    <property type="term" value="F:protein kinase activity"/>
    <property type="evidence" value="ECO:0000314"/>
    <property type="project" value="UniProtKB"/>
</dbReference>
<dbReference type="GO" id="GO:0106310">
    <property type="term" value="F:protein serine kinase activity"/>
    <property type="evidence" value="ECO:0007669"/>
    <property type="project" value="RHEA"/>
</dbReference>
<dbReference type="GO" id="GO:0004674">
    <property type="term" value="F:protein serine/threonine kinase activity"/>
    <property type="evidence" value="ECO:0007669"/>
    <property type="project" value="UniProtKB-KW"/>
</dbReference>
<dbReference type="GO" id="GO:0086069">
    <property type="term" value="P:bundle of His cell to Purkinje myocyte communication"/>
    <property type="evidence" value="ECO:0000315"/>
    <property type="project" value="BHF-UCL"/>
</dbReference>
<dbReference type="GO" id="GO:0036289">
    <property type="term" value="P:peptidyl-serine autophosphorylation"/>
    <property type="evidence" value="ECO:0000315"/>
    <property type="project" value="UniProtKB"/>
</dbReference>
<dbReference type="GO" id="GO:0006468">
    <property type="term" value="P:protein phosphorylation"/>
    <property type="evidence" value="ECO:0000314"/>
    <property type="project" value="UniProtKB"/>
</dbReference>
<dbReference type="GO" id="GO:1903779">
    <property type="term" value="P:regulation of cardiac conduction"/>
    <property type="evidence" value="ECO:0000316"/>
    <property type="project" value="BHF-UCL"/>
</dbReference>
<dbReference type="GO" id="GO:0055117">
    <property type="term" value="P:regulation of cardiac muscle contraction"/>
    <property type="evidence" value="ECO:0000315"/>
    <property type="project" value="BHF-UCL"/>
</dbReference>
<dbReference type="GO" id="GO:0002027">
    <property type="term" value="P:regulation of heart rate"/>
    <property type="evidence" value="ECO:0000315"/>
    <property type="project" value="BHF-UCL"/>
</dbReference>
<dbReference type="CDD" id="cd14064">
    <property type="entry name" value="PKc_TNNI3K"/>
    <property type="match status" value="1"/>
</dbReference>
<dbReference type="FunFam" id="1.10.510.10:FF:000259">
    <property type="entry name" value="Serine/threonine-protein kinase TNNI3K"/>
    <property type="match status" value="1"/>
</dbReference>
<dbReference type="FunFam" id="1.25.40.20:FF:000077">
    <property type="entry name" value="Serine/threonine-protein kinase TNNI3K"/>
    <property type="match status" value="1"/>
</dbReference>
<dbReference type="FunFam" id="1.25.40.20:FF:000155">
    <property type="entry name" value="Serine/threonine-protein kinase TNNI3K"/>
    <property type="match status" value="1"/>
</dbReference>
<dbReference type="FunFam" id="1.25.40.20:FF:000089">
    <property type="entry name" value="serine/threonine-protein kinase TNNI3K"/>
    <property type="match status" value="1"/>
</dbReference>
<dbReference type="Gene3D" id="1.25.40.20">
    <property type="entry name" value="Ankyrin repeat-containing domain"/>
    <property type="match status" value="3"/>
</dbReference>
<dbReference type="Gene3D" id="1.10.510.10">
    <property type="entry name" value="Transferase(Phosphotransferase) domain 1"/>
    <property type="match status" value="1"/>
</dbReference>
<dbReference type="InterPro" id="IPR002110">
    <property type="entry name" value="Ankyrin_rpt"/>
</dbReference>
<dbReference type="InterPro" id="IPR036770">
    <property type="entry name" value="Ankyrin_rpt-contain_sf"/>
</dbReference>
<dbReference type="InterPro" id="IPR011009">
    <property type="entry name" value="Kinase-like_dom_sf"/>
</dbReference>
<dbReference type="InterPro" id="IPR000719">
    <property type="entry name" value="Prot_kinase_dom"/>
</dbReference>
<dbReference type="InterPro" id="IPR017441">
    <property type="entry name" value="Protein_kinase_ATP_BS"/>
</dbReference>
<dbReference type="InterPro" id="IPR001245">
    <property type="entry name" value="Ser-Thr/Tyr_kinase_cat_dom"/>
</dbReference>
<dbReference type="PANTHER" id="PTHR24198">
    <property type="entry name" value="ANKYRIN REPEAT AND PROTEIN KINASE DOMAIN-CONTAINING PROTEIN"/>
    <property type="match status" value="1"/>
</dbReference>
<dbReference type="PANTHER" id="PTHR24198:SF183">
    <property type="entry name" value="SUPPRESSOR_ENHANCER OF LIN-12"/>
    <property type="match status" value="1"/>
</dbReference>
<dbReference type="Pfam" id="PF12796">
    <property type="entry name" value="Ank_2"/>
    <property type="match status" value="3"/>
</dbReference>
<dbReference type="Pfam" id="PF13637">
    <property type="entry name" value="Ank_4"/>
    <property type="match status" value="1"/>
</dbReference>
<dbReference type="Pfam" id="PF07714">
    <property type="entry name" value="PK_Tyr_Ser-Thr"/>
    <property type="match status" value="1"/>
</dbReference>
<dbReference type="PRINTS" id="PR01415">
    <property type="entry name" value="ANKYRIN"/>
</dbReference>
<dbReference type="SMART" id="SM00248">
    <property type="entry name" value="ANK"/>
    <property type="match status" value="10"/>
</dbReference>
<dbReference type="SUPFAM" id="SSF48403">
    <property type="entry name" value="Ankyrin repeat"/>
    <property type="match status" value="1"/>
</dbReference>
<dbReference type="SUPFAM" id="SSF56112">
    <property type="entry name" value="Protein kinase-like (PK-like)"/>
    <property type="match status" value="1"/>
</dbReference>
<dbReference type="PROSITE" id="PS50297">
    <property type="entry name" value="ANK_REP_REGION"/>
    <property type="match status" value="1"/>
</dbReference>
<dbReference type="PROSITE" id="PS50088">
    <property type="entry name" value="ANK_REPEAT"/>
    <property type="match status" value="6"/>
</dbReference>
<dbReference type="PROSITE" id="PS00107">
    <property type="entry name" value="PROTEIN_KINASE_ATP"/>
    <property type="match status" value="1"/>
</dbReference>
<dbReference type="PROSITE" id="PS50011">
    <property type="entry name" value="PROTEIN_KINASE_DOM"/>
    <property type="match status" value="1"/>
</dbReference>
<accession>Q59H18</accession>
<accession>Q17RN0</accession>
<accession>Q49AR1</accession>
<accession>Q6MZS9</accession>
<accession>Q9Y2V6</accession>
<feature type="chain" id="PRO_0000086757" description="Serine/threonine-protein kinase TNNI3K">
    <location>
        <begin position="1"/>
        <end position="835"/>
    </location>
</feature>
<feature type="repeat" description="ANK 1">
    <location>
        <begin position="66"/>
        <end position="96"/>
    </location>
</feature>
<feature type="repeat" description="ANK 2">
    <location>
        <begin position="100"/>
        <end position="129"/>
    </location>
</feature>
<feature type="repeat" description="ANK 3">
    <location>
        <begin position="133"/>
        <end position="162"/>
    </location>
</feature>
<feature type="repeat" description="ANK 4">
    <location>
        <begin position="166"/>
        <end position="195"/>
    </location>
</feature>
<feature type="repeat" description="ANK 5">
    <location>
        <begin position="199"/>
        <end position="228"/>
    </location>
</feature>
<feature type="repeat" description="ANK 6">
    <location>
        <begin position="234"/>
        <end position="263"/>
    </location>
</feature>
<feature type="repeat" description="ANK 7">
    <location>
        <begin position="269"/>
        <end position="298"/>
    </location>
</feature>
<feature type="repeat" description="ANK 8">
    <location>
        <begin position="304"/>
        <end position="335"/>
    </location>
</feature>
<feature type="repeat" description="ANK 9">
    <location>
        <begin position="339"/>
        <end position="368"/>
    </location>
</feature>
<feature type="repeat" description="ANK 10">
    <location>
        <begin position="381"/>
        <end position="410"/>
    </location>
</feature>
<feature type="domain" description="Protein kinase" evidence="2">
    <location>
        <begin position="463"/>
        <end position="723"/>
    </location>
</feature>
<feature type="region of interest" description="Disordered" evidence="3">
    <location>
        <begin position="732"/>
        <end position="751"/>
    </location>
</feature>
<feature type="coiled-coil region" evidence="1">
    <location>
        <begin position="21"/>
        <end position="51"/>
    </location>
</feature>
<feature type="compositionally biased region" description="Low complexity" evidence="3">
    <location>
        <begin position="732"/>
        <end position="746"/>
    </location>
</feature>
<feature type="active site" description="Proton acceptor" evidence="2">
    <location>
        <position position="588"/>
    </location>
</feature>
<feature type="binding site" evidence="2">
    <location>
        <begin position="469"/>
        <end position="477"/>
    </location>
    <ligand>
        <name>ATP</name>
        <dbReference type="ChEBI" id="CHEBI:30616"/>
    </ligand>
</feature>
<feature type="binding site">
    <location>
        <position position="490"/>
    </location>
    <ligand>
        <name>ATP</name>
        <dbReference type="ChEBI" id="CHEBI:30616"/>
    </ligand>
</feature>
<feature type="splice variant" id="VSP_039403" description="In isoform 1, isoform 3 and isoform 4." evidence="15 16 17">
    <original>MGNYKSRPTQTCT</original>
    <variation>MAAARDPPEVSLREATQRKLRRFSELRGKLVARGEFWDIVAITAADEKQELAYNQQLSEKLKRKELPLGVQYHVFVDPAGAKIGNGGSTLCALQCLEKLYGDKWNSFTILLIHS</variation>
    <location>
        <begin position="1"/>
        <end position="13"/>
    </location>
</feature>
<feature type="splice variant" id="VSP_051882" description="In isoform 3." evidence="16">
    <original>SHNILL</original>
    <variation>RYFFPK</variation>
    <location>
        <begin position="591"/>
        <end position="596"/>
    </location>
</feature>
<feature type="splice variant" id="VSP_051883" description="In isoform 3." evidence="16">
    <location>
        <begin position="597"/>
        <end position="835"/>
    </location>
</feature>
<feature type="splice variant" id="VSP_051884" description="In isoform 4." evidence="15">
    <original>GRPEFSEVVMKLEECLCNIELMSPASSNSSGSLSP</original>
    <variation>AKSRPSHYPVSSVYTETLKKKNEDRFGMWIEYLRR</variation>
    <location>
        <begin position="708"/>
        <end position="742"/>
    </location>
</feature>
<feature type="splice variant" id="VSP_051885" description="In isoform 4." evidence="15">
    <location>
        <begin position="743"/>
        <end position="835"/>
    </location>
</feature>
<feature type="sequence variant" id="VAR_041223" description="In dbSNP:rs34874695." evidence="6">
    <original>D</original>
    <variation>H</variation>
    <location>
        <position position="151"/>
    </location>
</feature>
<feature type="sequence variant" id="VAR_041224" description="In dbSNP:rs34521608." evidence="6">
    <original>P</original>
    <variation>L</variation>
    <location>
        <position position="263"/>
    </location>
</feature>
<feature type="sequence variant" id="VAR_041225" evidence="6">
    <original>F</original>
    <variation>L</variation>
    <location>
        <position position="309"/>
    </location>
</feature>
<feature type="sequence variant" id="VAR_041226" description="In a colorectal adenocarcinoma sample; somatic mutation." evidence="6">
    <original>S</original>
    <variation>L</variation>
    <location>
        <position position="430"/>
    </location>
</feature>
<feature type="sequence variant" id="VAR_041227" description="Decreased autophosphorylation; dbSNP:rs34335537." evidence="6 11">
    <original>V</original>
    <variation>L</variation>
    <location>
        <position position="510"/>
    </location>
</feature>
<feature type="sequence variant" id="VAR_089865" description="Found in a consaguineous family with autosomal recessive cardiac conduction disease; uncertain significance; no effect on phosphorylation." evidence="10 11">
    <original>S</original>
    <variation>P</variation>
    <location>
        <position position="511"/>
    </location>
</feature>
<feature type="sequence variant" id="VAR_089866" description="In CCDD; uncertain significance; increased autophosphorylation; dbSNP:rs2100520576." evidence="11">
    <original>I</original>
    <variation>T</variation>
    <location>
        <position position="512"/>
    </location>
</feature>
<feature type="sequence variant" id="VAR_072650" description="In CCDD; pathogenic; the mutation results in decreased protein solubility; causes abnormal aggregation; markedly reduced protein expression is observed in the sarcoplasm and nuclei of patient cardiomyocytes; severely reduced autophosphorylation; dbSNP:rs606231469." evidence="7 9">
    <original>G</original>
    <variation>D</variation>
    <location>
        <position position="526"/>
    </location>
</feature>
<feature type="sequence variant" id="VAR_089867" description="In CCDD; uncertain significance; dbSNP:rs1662479663." evidence="8 9">
    <original>T</original>
    <variation>A</variation>
    <location>
        <position position="539"/>
    </location>
</feature>
<feature type="sequence variant" id="VAR_089868" description="In CCDD; likely pathogenic; severely decreased autophosphorylation; dbSNP:rs201010209." evidence="12">
    <original>L</original>
    <variation>F</variation>
    <location>
        <position position="577"/>
    </location>
</feature>
<feature type="sequence variant" id="VAR_089869" description="No effect on autophosphorylation; dbSNP:rs145260115." evidence="11">
    <original>S</original>
    <variation>T</variation>
    <location>
        <position position="591"/>
    </location>
</feature>
<feature type="sequence variant" id="VAR_089870" description="In CCDD; uncertain significance; increased autophosphorylation; dbSNP:rs567089878." evidence="11">
    <original>H</original>
    <variation>Y</variation>
    <location>
        <position position="592"/>
    </location>
</feature>
<feature type="sequence variant" id="VAR_035639" description="In a colorectal cancer sample; somatic mutation." evidence="5">
    <original>R</original>
    <variation>G</variation>
    <location>
        <position position="629"/>
    </location>
</feature>
<feature type="sequence variant" id="VAR_041228" description="In dbSNP:rs2274260." evidence="6">
    <original>T</original>
    <variation>M</variation>
    <location>
        <position position="637"/>
    </location>
</feature>
<feature type="sequence variant" id="VAR_089871" description="In CCDD; uncertain significance; increased autophosphorylation; dbSNP:rs201064243." evidence="11">
    <original>A</original>
    <variation>V</variation>
    <location>
        <position position="671"/>
    </location>
</feature>
<feature type="sequence variant" id="VAR_041229" description="In dbSNP:rs3737564." evidence="6">
    <original>I</original>
    <variation>T</variation>
    <location>
        <position position="686"/>
    </location>
</feature>
<feature type="sequence variant" id="VAR_089872" description="In CCDD; uncertain significance; decreased autophosphorylation; dbSNP:rs1210821808." evidence="11 12">
    <original>P</original>
    <variation>L</variation>
    <location>
        <position position="742"/>
    </location>
</feature>
<feature type="sequence variant" id="VAR_089873" description="In CCDD; likely pathogenic; increased autophosphorylation; dbSNP:rs202238194." evidence="9">
    <original>E</original>
    <variation>K</variation>
    <location>
        <position position="768"/>
    </location>
</feature>
<feature type="sequence variant" id="VAR_038821" description="In dbSNP:rs45578635." evidence="13">
    <original>A</original>
    <variation>G</variation>
    <location>
        <position position="785"/>
    </location>
</feature>
<feature type="sequence variant" id="VAR_041230" description="In a head &amp; Neck squamous cell carcinoma sample; somatic mutation; dbSNP:rs201613442." evidence="6">
    <original>M</original>
    <variation>I</variation>
    <location>
        <position position="798"/>
    </location>
</feature>
<feature type="sequence variant" id="VAR_038822" description="In dbSNP:rs45614933." evidence="13">
    <original>D</original>
    <variation>Y</variation>
    <location>
        <position position="833"/>
    </location>
</feature>
<feature type="mutagenesis site" description="Loss of autophosphorylation activity." evidence="4 11">
    <original>K</original>
    <variation>R</variation>
    <location>
        <position position="490"/>
    </location>
</feature>
<feature type="mutagenesis site" description="Increased autophosphorylation." evidence="11">
    <original>I</original>
    <variation>F</variation>
    <location>
        <position position="512"/>
    </location>
</feature>
<feature type="mutagenesis site" description="Loss of autophosphorylation." evidence="11">
    <location>
        <begin position="556"/>
        <end position="590"/>
    </location>
</feature>
<feature type="sequence conflict" description="In Ref. 8; AAH32865." evidence="18" ref="8">
    <original>I</original>
    <variation>V</variation>
    <location>
        <position position="127"/>
    </location>
</feature>
<feature type="sequence conflict" description="In Ref. 4; CAE45949." evidence="18" ref="4">
    <original>I</original>
    <variation>M</variation>
    <location>
        <position position="250"/>
    </location>
</feature>
<feature type="sequence conflict" description="In Ref. 4; CAE45949." evidence="18" ref="4">
    <original>N</original>
    <variation>S</variation>
    <location>
        <position position="367"/>
    </location>
</feature>
<feature type="sequence conflict" description="In Ref. 8; AAH32865." evidence="18" ref="8">
    <original>R</original>
    <variation>L</variation>
    <location>
        <position position="629"/>
    </location>
</feature>
<feature type="helix" evidence="23">
    <location>
        <begin position="442"/>
        <end position="451"/>
    </location>
</feature>
<feature type="helix" evidence="23">
    <location>
        <begin position="454"/>
        <end position="456"/>
    </location>
</feature>
<feature type="helix" evidence="23">
    <location>
        <begin position="460"/>
        <end position="462"/>
    </location>
</feature>
<feature type="strand" evidence="23">
    <location>
        <begin position="463"/>
        <end position="470"/>
    </location>
</feature>
<feature type="strand" evidence="23">
    <location>
        <begin position="473"/>
        <end position="482"/>
    </location>
</feature>
<feature type="strand" evidence="23">
    <location>
        <begin position="485"/>
        <end position="492"/>
    </location>
</feature>
<feature type="helix" evidence="23">
    <location>
        <begin position="502"/>
        <end position="515"/>
    </location>
</feature>
<feature type="strand" evidence="23">
    <location>
        <begin position="524"/>
        <end position="528"/>
    </location>
</feature>
<feature type="helix" evidence="23">
    <location>
        <begin position="532"/>
        <end position="534"/>
    </location>
</feature>
<feature type="strand" evidence="23">
    <location>
        <begin position="536"/>
        <end position="540"/>
    </location>
</feature>
<feature type="helix" evidence="23">
    <location>
        <begin position="547"/>
        <end position="552"/>
    </location>
</feature>
<feature type="helix" evidence="23">
    <location>
        <begin position="560"/>
        <end position="578"/>
    </location>
</feature>
<feature type="strand" evidence="23">
    <location>
        <begin position="580"/>
        <end position="582"/>
    </location>
</feature>
<feature type="helix" evidence="23">
    <location>
        <begin position="591"/>
        <end position="593"/>
    </location>
</feature>
<feature type="strand" evidence="23">
    <location>
        <begin position="594"/>
        <end position="596"/>
    </location>
</feature>
<feature type="strand" evidence="23">
    <location>
        <begin position="602"/>
        <end position="604"/>
    </location>
</feature>
<feature type="helix" evidence="23">
    <location>
        <begin position="628"/>
        <end position="630"/>
    </location>
</feature>
<feature type="helix" evidence="23">
    <location>
        <begin position="633"/>
        <end position="636"/>
    </location>
</feature>
<feature type="helix" evidence="23">
    <location>
        <begin position="637"/>
        <end position="639"/>
    </location>
</feature>
<feature type="helix" evidence="23">
    <location>
        <begin position="645"/>
        <end position="660"/>
    </location>
</feature>
<feature type="turn" evidence="23">
    <location>
        <begin position="664"/>
        <end position="667"/>
    </location>
</feature>
<feature type="helix" evidence="23">
    <location>
        <begin position="670"/>
        <end position="678"/>
    </location>
</feature>
<feature type="strand" evidence="24">
    <location>
        <begin position="688"/>
        <end position="690"/>
    </location>
</feature>
<feature type="helix" evidence="23">
    <location>
        <begin position="692"/>
        <end position="701"/>
    </location>
</feature>
<feature type="helix" evidence="23">
    <location>
        <begin position="706"/>
        <end position="708"/>
    </location>
</feature>
<feature type="helix" evidence="23">
    <location>
        <begin position="712"/>
        <end position="725"/>
    </location>
</feature>
<evidence type="ECO:0000255" key="1"/>
<evidence type="ECO:0000255" key="2">
    <source>
        <dbReference type="PROSITE-ProRule" id="PRU00159"/>
    </source>
</evidence>
<evidence type="ECO:0000256" key="3">
    <source>
        <dbReference type="SAM" id="MobiDB-lite"/>
    </source>
</evidence>
<evidence type="ECO:0000269" key="4">
    <source>
    </source>
</evidence>
<evidence type="ECO:0000269" key="5">
    <source>
    </source>
</evidence>
<evidence type="ECO:0000269" key="6">
    <source>
    </source>
</evidence>
<evidence type="ECO:0000269" key="7">
    <source>
    </source>
</evidence>
<evidence type="ECO:0000269" key="8">
    <source>
    </source>
</evidence>
<evidence type="ECO:0000269" key="9">
    <source>
    </source>
</evidence>
<evidence type="ECO:0000269" key="10">
    <source>
    </source>
</evidence>
<evidence type="ECO:0000269" key="11">
    <source>
    </source>
</evidence>
<evidence type="ECO:0000269" key="12">
    <source>
    </source>
</evidence>
<evidence type="ECO:0000269" key="13">
    <source ref="5"/>
</evidence>
<evidence type="ECO:0000303" key="14">
    <source>
    </source>
</evidence>
<evidence type="ECO:0000303" key="15">
    <source>
    </source>
</evidence>
<evidence type="ECO:0000303" key="16">
    <source>
    </source>
</evidence>
<evidence type="ECO:0000303" key="17">
    <source ref="3"/>
</evidence>
<evidence type="ECO:0000305" key="18"/>
<evidence type="ECO:0000312" key="19">
    <source>
        <dbReference type="EMBL" id="AAD29632.1"/>
    </source>
</evidence>
<evidence type="ECO:0000312" key="20">
    <source>
        <dbReference type="EMBL" id="AAH32865.1"/>
    </source>
</evidence>
<evidence type="ECO:0000312" key="21">
    <source>
        <dbReference type="EMBL" id="AAP72030.1"/>
    </source>
</evidence>
<evidence type="ECO:0000312" key="22">
    <source>
        <dbReference type="EMBL" id="BAD92178.1"/>
    </source>
</evidence>
<evidence type="ECO:0007829" key="23">
    <source>
        <dbReference type="PDB" id="4YFI"/>
    </source>
</evidence>
<evidence type="ECO:0007829" key="24">
    <source>
        <dbReference type="PDB" id="7MGK"/>
    </source>
</evidence>
<name>TNI3K_HUMAN</name>
<organism>
    <name type="scientific">Homo sapiens</name>
    <name type="common">Human</name>
    <dbReference type="NCBI Taxonomy" id="9606"/>
    <lineage>
        <taxon>Eukaryota</taxon>
        <taxon>Metazoa</taxon>
        <taxon>Chordata</taxon>
        <taxon>Craniata</taxon>
        <taxon>Vertebrata</taxon>
        <taxon>Euteleostomi</taxon>
        <taxon>Mammalia</taxon>
        <taxon>Eutheria</taxon>
        <taxon>Euarchontoglires</taxon>
        <taxon>Primates</taxon>
        <taxon>Haplorrhini</taxon>
        <taxon>Catarrhini</taxon>
        <taxon>Hominidae</taxon>
        <taxon>Homo</taxon>
    </lineage>
</organism>
<keyword id="KW-0002">3D-structure</keyword>
<keyword id="KW-0025">Alternative splicing</keyword>
<keyword id="KW-0040">ANK repeat</keyword>
<keyword id="KW-0067">ATP-binding</keyword>
<keyword id="KW-0122">Cardiomyopathy</keyword>
<keyword id="KW-0175">Coiled coil</keyword>
<keyword id="KW-0963">Cytoplasm</keyword>
<keyword id="KW-0225">Disease variant</keyword>
<keyword id="KW-0418">Kinase</keyword>
<keyword id="KW-0460">Magnesium</keyword>
<keyword id="KW-0479">Metal-binding</keyword>
<keyword id="KW-0547">Nucleotide-binding</keyword>
<keyword id="KW-0539">Nucleus</keyword>
<keyword id="KW-0597">Phosphoprotein</keyword>
<keyword id="KW-1267">Proteomics identification</keyword>
<keyword id="KW-1185">Reference proteome</keyword>
<keyword id="KW-0677">Repeat</keyword>
<keyword id="KW-0723">Serine/threonine-protein kinase</keyword>
<keyword id="KW-0808">Transferase</keyword>